<reference key="1">
    <citation type="journal article" date="2007" name="PLoS Genet.">
        <title>Patterns and implications of gene gain and loss in the evolution of Prochlorococcus.</title>
        <authorList>
            <person name="Kettler G.C."/>
            <person name="Martiny A.C."/>
            <person name="Huang K."/>
            <person name="Zucker J."/>
            <person name="Coleman M.L."/>
            <person name="Rodrigue S."/>
            <person name="Chen F."/>
            <person name="Lapidus A."/>
            <person name="Ferriera S."/>
            <person name="Johnson J."/>
            <person name="Steglich C."/>
            <person name="Church G.M."/>
            <person name="Richardson P."/>
            <person name="Chisholm S.W."/>
        </authorList>
    </citation>
    <scope>NUCLEOTIDE SEQUENCE [LARGE SCALE GENOMIC DNA]</scope>
    <source>
        <strain>AS9601</strain>
    </source>
</reference>
<keyword id="KW-0066">ATP synthesis</keyword>
<keyword id="KW-0139">CF(1)</keyword>
<keyword id="KW-0375">Hydrogen ion transport</keyword>
<keyword id="KW-0406">Ion transport</keyword>
<keyword id="KW-0472">Membrane</keyword>
<keyword id="KW-0793">Thylakoid</keyword>
<keyword id="KW-0813">Transport</keyword>
<feature type="chain" id="PRO_1000053287" description="ATP synthase gamma chain">
    <location>
        <begin position="1"/>
        <end position="316"/>
    </location>
</feature>
<sequence length="316" mass="35307">MANLKEIRDRIVSVKNTRKITEAMRLVAAAKVRRAQDQVLKSRPFADKLARVLENIQSRVQFEAVDSPLLSKREVKSISLVCITADRGLCGGYNTNIIKKVEIRYAELVKQGYQPNLILVGKKAIGYFQNRKDRYAIKSTFKELEQVPTVKDSEGVTNEILAEFLSENSDRVEIIYTKFITLVSCAPVVQTLLPLDPQGIAEENDEIFRLTTKDSKLLVEKSNIEKSDSEKLPSDIVFEQSPDQLLDSLLPLYLQNQVLRALQESAASELACRMTAMNNASDNAKELASTLNLTYNKARQAAITQEILEVVGGSAV</sequence>
<dbReference type="EMBL" id="CP000551">
    <property type="protein sequence ID" value="ABM70935.1"/>
    <property type="molecule type" value="Genomic_DNA"/>
</dbReference>
<dbReference type="RefSeq" id="WP_011819065.1">
    <property type="nucleotide sequence ID" value="NC_008816.1"/>
</dbReference>
<dbReference type="SMR" id="A2BT24"/>
<dbReference type="STRING" id="146891.A9601_16521"/>
<dbReference type="KEGG" id="pmb:A9601_16521"/>
<dbReference type="eggNOG" id="COG0224">
    <property type="taxonomic scope" value="Bacteria"/>
</dbReference>
<dbReference type="HOGENOM" id="CLU_050669_0_0_3"/>
<dbReference type="OrthoDB" id="9812769at2"/>
<dbReference type="Proteomes" id="UP000002590">
    <property type="component" value="Chromosome"/>
</dbReference>
<dbReference type="GO" id="GO:0031676">
    <property type="term" value="C:plasma membrane-derived thylakoid membrane"/>
    <property type="evidence" value="ECO:0007669"/>
    <property type="project" value="UniProtKB-SubCell"/>
</dbReference>
<dbReference type="GO" id="GO:0045259">
    <property type="term" value="C:proton-transporting ATP synthase complex"/>
    <property type="evidence" value="ECO:0007669"/>
    <property type="project" value="UniProtKB-KW"/>
</dbReference>
<dbReference type="GO" id="GO:0005524">
    <property type="term" value="F:ATP binding"/>
    <property type="evidence" value="ECO:0007669"/>
    <property type="project" value="UniProtKB-UniRule"/>
</dbReference>
<dbReference type="GO" id="GO:0046933">
    <property type="term" value="F:proton-transporting ATP synthase activity, rotational mechanism"/>
    <property type="evidence" value="ECO:0007669"/>
    <property type="project" value="UniProtKB-UniRule"/>
</dbReference>
<dbReference type="CDD" id="cd12151">
    <property type="entry name" value="F1-ATPase_gamma"/>
    <property type="match status" value="1"/>
</dbReference>
<dbReference type="FunFam" id="3.40.1380.10:FF:000006">
    <property type="entry name" value="ATP synthase gamma chain"/>
    <property type="match status" value="1"/>
</dbReference>
<dbReference type="FunFam" id="1.10.287.80:FF:000003">
    <property type="entry name" value="ATP synthase gamma chain, chloroplastic"/>
    <property type="match status" value="1"/>
</dbReference>
<dbReference type="Gene3D" id="3.40.1380.10">
    <property type="match status" value="1"/>
</dbReference>
<dbReference type="Gene3D" id="1.10.287.80">
    <property type="entry name" value="ATP synthase, gamma subunit, helix hairpin domain"/>
    <property type="match status" value="2"/>
</dbReference>
<dbReference type="HAMAP" id="MF_00815">
    <property type="entry name" value="ATP_synth_gamma_bact"/>
    <property type="match status" value="1"/>
</dbReference>
<dbReference type="InterPro" id="IPR035968">
    <property type="entry name" value="ATP_synth_F1_ATPase_gsu"/>
</dbReference>
<dbReference type="InterPro" id="IPR000131">
    <property type="entry name" value="ATP_synth_F1_gsu"/>
</dbReference>
<dbReference type="NCBIfam" id="TIGR01146">
    <property type="entry name" value="ATPsyn_F1gamma"/>
    <property type="match status" value="1"/>
</dbReference>
<dbReference type="NCBIfam" id="NF004145">
    <property type="entry name" value="PRK05621.1-2"/>
    <property type="match status" value="1"/>
</dbReference>
<dbReference type="PANTHER" id="PTHR11693">
    <property type="entry name" value="ATP SYNTHASE GAMMA CHAIN"/>
    <property type="match status" value="1"/>
</dbReference>
<dbReference type="PANTHER" id="PTHR11693:SF41">
    <property type="entry name" value="ATP SYNTHASE GAMMA CHAIN, CHLOROPLASTIC"/>
    <property type="match status" value="1"/>
</dbReference>
<dbReference type="Pfam" id="PF00231">
    <property type="entry name" value="ATP-synt"/>
    <property type="match status" value="1"/>
</dbReference>
<dbReference type="PRINTS" id="PR00126">
    <property type="entry name" value="ATPASEGAMMA"/>
</dbReference>
<dbReference type="SUPFAM" id="SSF52943">
    <property type="entry name" value="ATP synthase (F1-ATPase), gamma subunit"/>
    <property type="match status" value="1"/>
</dbReference>
<organism>
    <name type="scientific">Prochlorococcus marinus (strain AS9601)</name>
    <dbReference type="NCBI Taxonomy" id="146891"/>
    <lineage>
        <taxon>Bacteria</taxon>
        <taxon>Bacillati</taxon>
        <taxon>Cyanobacteriota</taxon>
        <taxon>Cyanophyceae</taxon>
        <taxon>Synechococcales</taxon>
        <taxon>Prochlorococcaceae</taxon>
        <taxon>Prochlorococcus</taxon>
    </lineage>
</organism>
<accession>A2BT24</accession>
<evidence type="ECO:0000255" key="1">
    <source>
        <dbReference type="HAMAP-Rule" id="MF_00815"/>
    </source>
</evidence>
<proteinExistence type="inferred from homology"/>
<name>ATPG_PROMS</name>
<protein>
    <recommendedName>
        <fullName evidence="1">ATP synthase gamma chain</fullName>
    </recommendedName>
    <alternativeName>
        <fullName evidence="1">ATP synthase F1 sector gamma subunit</fullName>
    </alternativeName>
    <alternativeName>
        <fullName evidence="1">F-ATPase gamma subunit</fullName>
    </alternativeName>
</protein>
<gene>
    <name evidence="1" type="primary">atpG</name>
    <name evidence="1" type="synonym">atpC</name>
    <name type="ordered locus">A9601_16521</name>
</gene>
<comment type="function">
    <text evidence="1">Produces ATP from ADP in the presence of a proton gradient across the membrane. The gamma chain is believed to be important in regulating ATPase activity and the flow of protons through the CF(0) complex.</text>
</comment>
<comment type="subunit">
    <text evidence="1">F-type ATPases have 2 components, CF(1) - the catalytic core - and CF(0) - the membrane proton channel. CF(1) has five subunits: alpha(3), beta(3), gamma(1), delta(1), epsilon(1). CF(0) has three main subunits: a, b and c.</text>
</comment>
<comment type="subcellular location">
    <subcellularLocation>
        <location evidence="1">Cellular thylakoid membrane</location>
        <topology evidence="1">Peripheral membrane protein</topology>
    </subcellularLocation>
</comment>
<comment type="similarity">
    <text evidence="1">Belongs to the ATPase gamma chain family.</text>
</comment>